<comment type="similarity">
    <text evidence="1">Belongs to the universal ribosomal protein uL29 family.</text>
</comment>
<name>RL29_CHLTB</name>
<feature type="chain" id="PRO_1000121747" description="Large ribosomal subunit protein uL29">
    <location>
        <begin position="1"/>
        <end position="72"/>
    </location>
</feature>
<evidence type="ECO:0000255" key="1">
    <source>
        <dbReference type="HAMAP-Rule" id="MF_00374"/>
    </source>
</evidence>
<evidence type="ECO:0000305" key="2"/>
<dbReference type="EMBL" id="AM884177">
    <property type="protein sequence ID" value="CAP07174.1"/>
    <property type="molecule type" value="Genomic_DNA"/>
</dbReference>
<dbReference type="RefSeq" id="WP_009873872.1">
    <property type="nucleotide sequence ID" value="NC_010280.2"/>
</dbReference>
<dbReference type="SMR" id="B0BCF9"/>
<dbReference type="KEGG" id="ctl:CTLon_0777"/>
<dbReference type="HOGENOM" id="CLU_2715043_0_0_0"/>
<dbReference type="Proteomes" id="UP001154401">
    <property type="component" value="Chromosome"/>
</dbReference>
<dbReference type="GO" id="GO:0022625">
    <property type="term" value="C:cytosolic large ribosomal subunit"/>
    <property type="evidence" value="ECO:0007669"/>
    <property type="project" value="TreeGrafter"/>
</dbReference>
<dbReference type="GO" id="GO:0003735">
    <property type="term" value="F:structural constituent of ribosome"/>
    <property type="evidence" value="ECO:0007669"/>
    <property type="project" value="InterPro"/>
</dbReference>
<dbReference type="GO" id="GO:0006412">
    <property type="term" value="P:translation"/>
    <property type="evidence" value="ECO:0007669"/>
    <property type="project" value="UniProtKB-UniRule"/>
</dbReference>
<dbReference type="Gene3D" id="1.10.287.310">
    <property type="match status" value="1"/>
</dbReference>
<dbReference type="HAMAP" id="MF_00374">
    <property type="entry name" value="Ribosomal_uL29"/>
    <property type="match status" value="1"/>
</dbReference>
<dbReference type="InterPro" id="IPR050063">
    <property type="entry name" value="Ribosomal_protein_uL29"/>
</dbReference>
<dbReference type="InterPro" id="IPR001854">
    <property type="entry name" value="Ribosomal_uL29"/>
</dbReference>
<dbReference type="InterPro" id="IPR018254">
    <property type="entry name" value="Ribosomal_uL29_CS"/>
</dbReference>
<dbReference type="InterPro" id="IPR036049">
    <property type="entry name" value="Ribosomal_uL29_sf"/>
</dbReference>
<dbReference type="NCBIfam" id="TIGR00012">
    <property type="entry name" value="L29"/>
    <property type="match status" value="1"/>
</dbReference>
<dbReference type="PANTHER" id="PTHR10916">
    <property type="entry name" value="60S RIBOSOMAL PROTEIN L35/50S RIBOSOMAL PROTEIN L29"/>
    <property type="match status" value="1"/>
</dbReference>
<dbReference type="PANTHER" id="PTHR10916:SF0">
    <property type="entry name" value="LARGE RIBOSOMAL SUBUNIT PROTEIN UL29C"/>
    <property type="match status" value="1"/>
</dbReference>
<dbReference type="Pfam" id="PF00831">
    <property type="entry name" value="Ribosomal_L29"/>
    <property type="match status" value="1"/>
</dbReference>
<dbReference type="SUPFAM" id="SSF46561">
    <property type="entry name" value="Ribosomal protein L29 (L29p)"/>
    <property type="match status" value="1"/>
</dbReference>
<dbReference type="PROSITE" id="PS00579">
    <property type="entry name" value="RIBOSOMAL_L29"/>
    <property type="match status" value="1"/>
</dbReference>
<gene>
    <name evidence="1" type="primary">rpmC</name>
    <name type="ordered locus">CTLon_0777</name>
</gene>
<keyword id="KW-0687">Ribonucleoprotein</keyword>
<keyword id="KW-0689">Ribosomal protein</keyword>
<accession>B0BCF9</accession>
<reference key="1">
    <citation type="journal article" date="2008" name="Genome Res.">
        <title>Chlamydia trachomatis: genome sequence analysis of lymphogranuloma venereum isolates.</title>
        <authorList>
            <person name="Thomson N.R."/>
            <person name="Holden M.T.G."/>
            <person name="Carder C."/>
            <person name="Lennard N."/>
            <person name="Lockey S.J."/>
            <person name="Marsh P."/>
            <person name="Skipp P."/>
            <person name="O'Connor C.D."/>
            <person name="Goodhead I."/>
            <person name="Norbertzcak H."/>
            <person name="Harris B."/>
            <person name="Ormond D."/>
            <person name="Rance R."/>
            <person name="Quail M.A."/>
            <person name="Parkhill J."/>
            <person name="Stephens R.S."/>
            <person name="Clarke I.N."/>
        </authorList>
    </citation>
    <scope>NUCLEOTIDE SEQUENCE [LARGE SCALE GENOMIC DNA]</scope>
    <source>
        <strain>UCH-1/proctitis</strain>
    </source>
</reference>
<proteinExistence type="inferred from homology"/>
<sequence length="72" mass="8295">MGAKKNLLAELREKSSEELDEFIRDNKKALFALRAEAALQNKVVKTHQFSLYKKSIARALIIKQEKKDRVHG</sequence>
<organism>
    <name type="scientific">Chlamydia trachomatis serovar L2b (strain UCH-1/proctitis)</name>
    <dbReference type="NCBI Taxonomy" id="471473"/>
    <lineage>
        <taxon>Bacteria</taxon>
        <taxon>Pseudomonadati</taxon>
        <taxon>Chlamydiota</taxon>
        <taxon>Chlamydiia</taxon>
        <taxon>Chlamydiales</taxon>
        <taxon>Chlamydiaceae</taxon>
        <taxon>Chlamydia/Chlamydophila group</taxon>
        <taxon>Chlamydia</taxon>
    </lineage>
</organism>
<protein>
    <recommendedName>
        <fullName evidence="1">Large ribosomal subunit protein uL29</fullName>
    </recommendedName>
    <alternativeName>
        <fullName evidence="2">50S ribosomal protein L29</fullName>
    </alternativeName>
</protein>